<name>HSCA_BURA4</name>
<protein>
    <recommendedName>
        <fullName evidence="1">Chaperone protein HscA homolog</fullName>
    </recommendedName>
</protein>
<proteinExistence type="inferred from homology"/>
<reference key="1">
    <citation type="submission" date="2008-04" db="EMBL/GenBank/DDBJ databases">
        <title>Complete sequence of chromosome 1 of Burkholderia ambifaria MC40-6.</title>
        <authorList>
            <person name="Copeland A."/>
            <person name="Lucas S."/>
            <person name="Lapidus A."/>
            <person name="Glavina del Rio T."/>
            <person name="Dalin E."/>
            <person name="Tice H."/>
            <person name="Pitluck S."/>
            <person name="Chain P."/>
            <person name="Malfatti S."/>
            <person name="Shin M."/>
            <person name="Vergez L."/>
            <person name="Lang D."/>
            <person name="Schmutz J."/>
            <person name="Larimer F."/>
            <person name="Land M."/>
            <person name="Hauser L."/>
            <person name="Kyrpides N."/>
            <person name="Lykidis A."/>
            <person name="Ramette A."/>
            <person name="Konstantinidis K."/>
            <person name="Tiedje J."/>
            <person name="Richardson P."/>
        </authorList>
    </citation>
    <scope>NUCLEOTIDE SEQUENCE [LARGE SCALE GENOMIC DNA]</scope>
    <source>
        <strain>MC40-6</strain>
    </source>
</reference>
<feature type="chain" id="PRO_1000131666" description="Chaperone protein HscA homolog">
    <location>
        <begin position="1"/>
        <end position="622"/>
    </location>
</feature>
<gene>
    <name evidence="1" type="primary">hscA</name>
    <name type="ordered locus">BamMC406_2032</name>
</gene>
<organism>
    <name type="scientific">Burkholderia ambifaria (strain MC40-6)</name>
    <dbReference type="NCBI Taxonomy" id="398577"/>
    <lineage>
        <taxon>Bacteria</taxon>
        <taxon>Pseudomonadati</taxon>
        <taxon>Pseudomonadota</taxon>
        <taxon>Betaproteobacteria</taxon>
        <taxon>Burkholderiales</taxon>
        <taxon>Burkholderiaceae</taxon>
        <taxon>Burkholderia</taxon>
        <taxon>Burkholderia cepacia complex</taxon>
    </lineage>
</organism>
<comment type="function">
    <text evidence="1">Chaperone involved in the maturation of iron-sulfur cluster-containing proteins. Has a low intrinsic ATPase activity which is markedly stimulated by HscB.</text>
</comment>
<comment type="similarity">
    <text evidence="1">Belongs to the heat shock protein 70 family.</text>
</comment>
<accession>B1YT24</accession>
<dbReference type="EMBL" id="CP001025">
    <property type="protein sequence ID" value="ACB64513.1"/>
    <property type="molecule type" value="Genomic_DNA"/>
</dbReference>
<dbReference type="RefSeq" id="WP_012364218.1">
    <property type="nucleotide sequence ID" value="NC_010551.1"/>
</dbReference>
<dbReference type="SMR" id="B1YT24"/>
<dbReference type="KEGG" id="bac:BamMC406_2032"/>
<dbReference type="HOGENOM" id="CLU_005965_2_4_4"/>
<dbReference type="OrthoDB" id="9766019at2"/>
<dbReference type="Proteomes" id="UP000001680">
    <property type="component" value="Chromosome 1"/>
</dbReference>
<dbReference type="GO" id="GO:0005524">
    <property type="term" value="F:ATP binding"/>
    <property type="evidence" value="ECO:0007669"/>
    <property type="project" value="UniProtKB-KW"/>
</dbReference>
<dbReference type="GO" id="GO:0016887">
    <property type="term" value="F:ATP hydrolysis activity"/>
    <property type="evidence" value="ECO:0007669"/>
    <property type="project" value="UniProtKB-UniRule"/>
</dbReference>
<dbReference type="GO" id="GO:0140662">
    <property type="term" value="F:ATP-dependent protein folding chaperone"/>
    <property type="evidence" value="ECO:0007669"/>
    <property type="project" value="InterPro"/>
</dbReference>
<dbReference type="GO" id="GO:0051082">
    <property type="term" value="F:unfolded protein binding"/>
    <property type="evidence" value="ECO:0007669"/>
    <property type="project" value="InterPro"/>
</dbReference>
<dbReference type="GO" id="GO:0016226">
    <property type="term" value="P:iron-sulfur cluster assembly"/>
    <property type="evidence" value="ECO:0007669"/>
    <property type="project" value="InterPro"/>
</dbReference>
<dbReference type="CDD" id="cd10236">
    <property type="entry name" value="ASKHA_NBD_HSP70_HscA"/>
    <property type="match status" value="1"/>
</dbReference>
<dbReference type="FunFam" id="3.30.420.40:FF:000046">
    <property type="entry name" value="Chaperone protein HscA"/>
    <property type="match status" value="1"/>
</dbReference>
<dbReference type="FunFam" id="2.60.34.10:FF:000005">
    <property type="entry name" value="Chaperone protein HscA homolog"/>
    <property type="match status" value="1"/>
</dbReference>
<dbReference type="Gene3D" id="1.20.1270.10">
    <property type="match status" value="1"/>
</dbReference>
<dbReference type="Gene3D" id="3.30.420.40">
    <property type="match status" value="2"/>
</dbReference>
<dbReference type="Gene3D" id="3.90.640.10">
    <property type="entry name" value="Actin, Chain A, domain 4"/>
    <property type="match status" value="1"/>
</dbReference>
<dbReference type="Gene3D" id="2.60.34.10">
    <property type="entry name" value="Substrate Binding Domain Of DNAk, Chain A, domain 1"/>
    <property type="match status" value="1"/>
</dbReference>
<dbReference type="HAMAP" id="MF_00679">
    <property type="entry name" value="HscA"/>
    <property type="match status" value="1"/>
</dbReference>
<dbReference type="InterPro" id="IPR043129">
    <property type="entry name" value="ATPase_NBD"/>
</dbReference>
<dbReference type="InterPro" id="IPR018181">
    <property type="entry name" value="Heat_shock_70_CS"/>
</dbReference>
<dbReference type="InterPro" id="IPR042039">
    <property type="entry name" value="HscA_NBD"/>
</dbReference>
<dbReference type="InterPro" id="IPR029048">
    <property type="entry name" value="HSP70_C_sf"/>
</dbReference>
<dbReference type="InterPro" id="IPR029047">
    <property type="entry name" value="HSP70_peptide-bd_sf"/>
</dbReference>
<dbReference type="InterPro" id="IPR013126">
    <property type="entry name" value="Hsp_70_fam"/>
</dbReference>
<dbReference type="InterPro" id="IPR010236">
    <property type="entry name" value="ISC_FeS_clus_asmbl_HscA"/>
</dbReference>
<dbReference type="NCBIfam" id="TIGR01991">
    <property type="entry name" value="HscA"/>
    <property type="match status" value="1"/>
</dbReference>
<dbReference type="NCBIfam" id="NF003520">
    <property type="entry name" value="PRK05183.1"/>
    <property type="match status" value="1"/>
</dbReference>
<dbReference type="PANTHER" id="PTHR19375">
    <property type="entry name" value="HEAT SHOCK PROTEIN 70KDA"/>
    <property type="match status" value="1"/>
</dbReference>
<dbReference type="Pfam" id="PF00012">
    <property type="entry name" value="HSP70"/>
    <property type="match status" value="1"/>
</dbReference>
<dbReference type="PRINTS" id="PR00301">
    <property type="entry name" value="HEATSHOCK70"/>
</dbReference>
<dbReference type="SUPFAM" id="SSF53067">
    <property type="entry name" value="Actin-like ATPase domain"/>
    <property type="match status" value="2"/>
</dbReference>
<dbReference type="SUPFAM" id="SSF100934">
    <property type="entry name" value="Heat shock protein 70kD (HSP70), C-terminal subdomain"/>
    <property type="match status" value="1"/>
</dbReference>
<dbReference type="SUPFAM" id="SSF100920">
    <property type="entry name" value="Heat shock protein 70kD (HSP70), peptide-binding domain"/>
    <property type="match status" value="1"/>
</dbReference>
<dbReference type="PROSITE" id="PS00297">
    <property type="entry name" value="HSP70_1"/>
    <property type="match status" value="1"/>
</dbReference>
<dbReference type="PROSITE" id="PS00329">
    <property type="entry name" value="HSP70_2"/>
    <property type="match status" value="1"/>
</dbReference>
<dbReference type="PROSITE" id="PS01036">
    <property type="entry name" value="HSP70_3"/>
    <property type="match status" value="1"/>
</dbReference>
<evidence type="ECO:0000255" key="1">
    <source>
        <dbReference type="HAMAP-Rule" id="MF_00679"/>
    </source>
</evidence>
<sequence>MALLQISEPGMAPAPHQRRLAVGIDLGTTNSLVAAVRNSVPEVLPDEAGRALLPSVVRYLEKGGRRIGHEAKEQAATDPRNTIVSVKRFMGRGKAEVEGAANAPYEFVDAPGMVQIRTIDGVKSPVEVSAEILATLRYRAEDTLGDELVGAVITVPAYFDDAQRQATKDAARLAGLNVLRLLNEPTAAAIAYGLDNAAEGLYAVYDLGGGTFDLSILKLTKGVFEVLAAGGDSALGGDDFDHVLFGHVLAQAGIDAKALAPEDVRLLLDRVRVLKEALSSAPQASLDVTLSNGARLVQTISHDTFASLVEPLVQRTLTPTRKALRDAQVTPADIKGVVLVGGATRMPVIRDAVAKYFGQPPLVNLDPDQVVALGAAIQADLLAGNRGSGDDWLLLDVIPLSLGVETMGGLVEKIIPRNSTIPIARAQEFTTFKDGQTAMAIHVVQGERELVADCRSLARFELRGIPPMTAGAARIRVTYQVDADGLLSVFAREQHSGVEASVVVKPSYGLADDDIAKMLEDSFKTAEIDMRARALREAQVEAQRMIEATQAALSADGELLDDAERTQVDALVAALRTIAQGDDADAIETATKALADGTDEFAARRMDKSIKRALSGRRLDEI</sequence>
<keyword id="KW-0067">ATP-binding</keyword>
<keyword id="KW-0143">Chaperone</keyword>
<keyword id="KW-0547">Nucleotide-binding</keyword>